<dbReference type="EMBL" id="AP005775">
    <property type="protein sequence ID" value="BAD29241.1"/>
    <property type="molecule type" value="Genomic_DNA"/>
</dbReference>
<dbReference type="EMBL" id="AP005823">
    <property type="protein sequence ID" value="BAD29367.1"/>
    <property type="molecule type" value="Genomic_DNA"/>
</dbReference>
<dbReference type="EMBL" id="AP008208">
    <property type="protein sequence ID" value="BAF09645.2"/>
    <property type="status" value="ALT_SEQ"/>
    <property type="molecule type" value="Genomic_DNA"/>
</dbReference>
<dbReference type="EMBL" id="AP014958">
    <property type="protein sequence ID" value="BAS80283.1"/>
    <property type="molecule type" value="Genomic_DNA"/>
</dbReference>
<dbReference type="EMBL" id="CM000139">
    <property type="protein sequence ID" value="EAZ24177.1"/>
    <property type="status" value="ALT_SEQ"/>
    <property type="molecule type" value="Genomic_DNA"/>
</dbReference>
<dbReference type="EMBL" id="AK241359">
    <property type="status" value="NOT_ANNOTATED_CDS"/>
    <property type="molecule type" value="mRNA"/>
</dbReference>
<dbReference type="RefSeq" id="XP_015623009.1">
    <property type="nucleotide sequence ID" value="XM_015767523.1"/>
</dbReference>
<dbReference type="STRING" id="39947.Q6EPQ3"/>
<dbReference type="PaxDb" id="39947-Q6EPQ3"/>
<dbReference type="EnsemblPlants" id="Os02t0678200-01">
    <property type="protein sequence ID" value="Os02t0678200-01"/>
    <property type="gene ID" value="Os02g0678200"/>
</dbReference>
<dbReference type="Gramene" id="Os02t0678200-01">
    <property type="protein sequence ID" value="Os02t0678200-01"/>
    <property type="gene ID" value="Os02g0678200"/>
</dbReference>
<dbReference type="KEGG" id="dosa:Os02g0678200"/>
<dbReference type="eggNOG" id="KOG1161">
    <property type="taxonomic scope" value="Eukaryota"/>
</dbReference>
<dbReference type="eggNOG" id="KOG2325">
    <property type="taxonomic scope" value="Eukaryota"/>
</dbReference>
<dbReference type="HOGENOM" id="CLU_025236_1_0_1"/>
<dbReference type="InParanoid" id="Q6EPQ3"/>
<dbReference type="OMA" id="RANHPCS"/>
<dbReference type="OrthoDB" id="5588846at2759"/>
<dbReference type="Proteomes" id="UP000000763">
    <property type="component" value="Chromosome 2"/>
</dbReference>
<dbReference type="Proteomes" id="UP000007752">
    <property type="component" value="Chromosome 2"/>
</dbReference>
<dbReference type="Proteomes" id="UP000059680">
    <property type="component" value="Chromosome 2"/>
</dbReference>
<dbReference type="GO" id="GO:0016020">
    <property type="term" value="C:membrane"/>
    <property type="evidence" value="ECO:0000318"/>
    <property type="project" value="GO_Central"/>
</dbReference>
<dbReference type="GO" id="GO:0022857">
    <property type="term" value="F:transmembrane transporter activity"/>
    <property type="evidence" value="ECO:0000318"/>
    <property type="project" value="GO_Central"/>
</dbReference>
<dbReference type="CDD" id="cd14479">
    <property type="entry name" value="SPX-MFS_plant"/>
    <property type="match status" value="1"/>
</dbReference>
<dbReference type="Gene3D" id="1.20.1250.20">
    <property type="entry name" value="MFS general substrate transporter like domains"/>
    <property type="match status" value="1"/>
</dbReference>
<dbReference type="InterPro" id="IPR011701">
    <property type="entry name" value="MFS"/>
</dbReference>
<dbReference type="InterPro" id="IPR051068">
    <property type="entry name" value="MFS_Domain-Containing_Protein"/>
</dbReference>
<dbReference type="InterPro" id="IPR036259">
    <property type="entry name" value="MFS_trans_sf"/>
</dbReference>
<dbReference type="InterPro" id="IPR004331">
    <property type="entry name" value="SPX_dom"/>
</dbReference>
<dbReference type="InterPro" id="IPR045264">
    <property type="entry name" value="SPXM_SPX_plant"/>
</dbReference>
<dbReference type="PANTHER" id="PTHR23510">
    <property type="entry name" value="INNER MEMBRANE TRANSPORT PROTEIN YAJR"/>
    <property type="match status" value="1"/>
</dbReference>
<dbReference type="PANTHER" id="PTHR23510:SF23">
    <property type="entry name" value="SPX DOMAIN-CONTAINING MEMBRANE PROTEIN OS02G45520"/>
    <property type="match status" value="1"/>
</dbReference>
<dbReference type="Pfam" id="PF07690">
    <property type="entry name" value="MFS_1"/>
    <property type="match status" value="1"/>
</dbReference>
<dbReference type="Pfam" id="PF03105">
    <property type="entry name" value="SPX"/>
    <property type="match status" value="1"/>
</dbReference>
<dbReference type="SUPFAM" id="SSF103473">
    <property type="entry name" value="MFS general substrate transporter"/>
    <property type="match status" value="1"/>
</dbReference>
<dbReference type="PROSITE" id="PS51382">
    <property type="entry name" value="SPX"/>
    <property type="match status" value="1"/>
</dbReference>
<comment type="subcellular location">
    <subcellularLocation>
        <location evidence="3">Membrane</location>
        <topology evidence="3">Multi-pass membrane protein</topology>
    </subcellularLocation>
</comment>
<comment type="similarity">
    <text evidence="3">Belongs to the major facilitator superfamily.</text>
</comment>
<comment type="sequence caution" evidence="3">
    <conflict type="erroneous gene model prediction">
        <sequence resource="EMBL-CDS" id="BAF09645"/>
    </conflict>
</comment>
<comment type="sequence caution" evidence="3">
    <conflict type="erroneous gene model prediction">
        <sequence resource="EMBL-CDS" id="EAZ24177"/>
    </conflict>
</comment>
<proteinExistence type="evidence at transcript level"/>
<reference key="1">
    <citation type="journal article" date="2005" name="Nature">
        <title>The map-based sequence of the rice genome.</title>
        <authorList>
            <consortium name="International rice genome sequencing project (IRGSP)"/>
        </authorList>
    </citation>
    <scope>NUCLEOTIDE SEQUENCE [LARGE SCALE GENOMIC DNA]</scope>
    <source>
        <strain>cv. Nipponbare</strain>
    </source>
</reference>
<reference key="2">
    <citation type="journal article" date="2008" name="Nucleic Acids Res.">
        <title>The rice annotation project database (RAP-DB): 2008 update.</title>
        <authorList>
            <consortium name="The rice annotation project (RAP)"/>
        </authorList>
    </citation>
    <scope>GENOME REANNOTATION</scope>
    <source>
        <strain>cv. Nipponbare</strain>
    </source>
</reference>
<reference key="3">
    <citation type="journal article" date="2013" name="Rice">
        <title>Improvement of the Oryza sativa Nipponbare reference genome using next generation sequence and optical map data.</title>
        <authorList>
            <person name="Kawahara Y."/>
            <person name="de la Bastide M."/>
            <person name="Hamilton J.P."/>
            <person name="Kanamori H."/>
            <person name="McCombie W.R."/>
            <person name="Ouyang S."/>
            <person name="Schwartz D.C."/>
            <person name="Tanaka T."/>
            <person name="Wu J."/>
            <person name="Zhou S."/>
            <person name="Childs K.L."/>
            <person name="Davidson R.M."/>
            <person name="Lin H."/>
            <person name="Quesada-Ocampo L."/>
            <person name="Vaillancourt B."/>
            <person name="Sakai H."/>
            <person name="Lee S.S."/>
            <person name="Kim J."/>
            <person name="Numa H."/>
            <person name="Itoh T."/>
            <person name="Buell C.R."/>
            <person name="Matsumoto T."/>
        </authorList>
    </citation>
    <scope>GENOME REANNOTATION</scope>
    <source>
        <strain>cv. Nipponbare</strain>
    </source>
</reference>
<reference key="4">
    <citation type="journal article" date="2005" name="PLoS Biol.">
        <title>The genomes of Oryza sativa: a history of duplications.</title>
        <authorList>
            <person name="Yu J."/>
            <person name="Wang J."/>
            <person name="Lin W."/>
            <person name="Li S."/>
            <person name="Li H."/>
            <person name="Zhou J."/>
            <person name="Ni P."/>
            <person name="Dong W."/>
            <person name="Hu S."/>
            <person name="Zeng C."/>
            <person name="Zhang J."/>
            <person name="Zhang Y."/>
            <person name="Li R."/>
            <person name="Xu Z."/>
            <person name="Li S."/>
            <person name="Li X."/>
            <person name="Zheng H."/>
            <person name="Cong L."/>
            <person name="Lin L."/>
            <person name="Yin J."/>
            <person name="Geng J."/>
            <person name="Li G."/>
            <person name="Shi J."/>
            <person name="Liu J."/>
            <person name="Lv H."/>
            <person name="Li J."/>
            <person name="Wang J."/>
            <person name="Deng Y."/>
            <person name="Ran L."/>
            <person name="Shi X."/>
            <person name="Wang X."/>
            <person name="Wu Q."/>
            <person name="Li C."/>
            <person name="Ren X."/>
            <person name="Wang J."/>
            <person name="Wang X."/>
            <person name="Li D."/>
            <person name="Liu D."/>
            <person name="Zhang X."/>
            <person name="Ji Z."/>
            <person name="Zhao W."/>
            <person name="Sun Y."/>
            <person name="Zhang Z."/>
            <person name="Bao J."/>
            <person name="Han Y."/>
            <person name="Dong L."/>
            <person name="Ji J."/>
            <person name="Chen P."/>
            <person name="Wu S."/>
            <person name="Liu J."/>
            <person name="Xiao Y."/>
            <person name="Bu D."/>
            <person name="Tan J."/>
            <person name="Yang L."/>
            <person name="Ye C."/>
            <person name="Zhang J."/>
            <person name="Xu J."/>
            <person name="Zhou Y."/>
            <person name="Yu Y."/>
            <person name="Zhang B."/>
            <person name="Zhuang S."/>
            <person name="Wei H."/>
            <person name="Liu B."/>
            <person name="Lei M."/>
            <person name="Yu H."/>
            <person name="Li Y."/>
            <person name="Xu H."/>
            <person name="Wei S."/>
            <person name="He X."/>
            <person name="Fang L."/>
            <person name="Zhang Z."/>
            <person name="Zhang Y."/>
            <person name="Huang X."/>
            <person name="Su Z."/>
            <person name="Tong W."/>
            <person name="Li J."/>
            <person name="Tong Z."/>
            <person name="Li S."/>
            <person name="Ye J."/>
            <person name="Wang L."/>
            <person name="Fang L."/>
            <person name="Lei T."/>
            <person name="Chen C.-S."/>
            <person name="Chen H.-C."/>
            <person name="Xu Z."/>
            <person name="Li H."/>
            <person name="Huang H."/>
            <person name="Zhang F."/>
            <person name="Xu H."/>
            <person name="Li N."/>
            <person name="Zhao C."/>
            <person name="Li S."/>
            <person name="Dong L."/>
            <person name="Huang Y."/>
            <person name="Li L."/>
            <person name="Xi Y."/>
            <person name="Qi Q."/>
            <person name="Li W."/>
            <person name="Zhang B."/>
            <person name="Hu W."/>
            <person name="Zhang Y."/>
            <person name="Tian X."/>
            <person name="Jiao Y."/>
            <person name="Liang X."/>
            <person name="Jin J."/>
            <person name="Gao L."/>
            <person name="Zheng W."/>
            <person name="Hao B."/>
            <person name="Liu S.-M."/>
            <person name="Wang W."/>
            <person name="Yuan L."/>
            <person name="Cao M."/>
            <person name="McDermott J."/>
            <person name="Samudrala R."/>
            <person name="Wang J."/>
            <person name="Wong G.K.-S."/>
            <person name="Yang H."/>
        </authorList>
    </citation>
    <scope>NUCLEOTIDE SEQUENCE [LARGE SCALE GENOMIC DNA]</scope>
    <source>
        <strain>cv. Nipponbare</strain>
    </source>
</reference>
<reference key="5">
    <citation type="submission" date="2006-10" db="EMBL/GenBank/DDBJ databases">
        <title>Oryza sativa full length cDNA.</title>
        <authorList>
            <consortium name="The rice full-length cDNA consortium"/>
        </authorList>
    </citation>
    <scope>NUCLEOTIDE SEQUENCE [LARGE SCALE MRNA]</scope>
    <source>
        <strain>cv. Nipponbare</strain>
    </source>
</reference>
<sequence length="697" mass="77951">MVNFGKRLMADQLEEWKEYYINYKMMKKKVKQYVQQTQNGGRNREQVLKEFSRMLDDQIEKIVLFLLQQQGHLASRIEKLGEERALLMEQADASQISELREAYREVGIDLMKLLRFVDMNATGIRKILKKFDKRFGYKFTDYYVSTRANHPCSQLQQIFKQVGIVAVVGALSRNLAFLQDHQGNFPSIYDHPSITLKDPIIEQINHSVQKLTHATNLLQFIGQHALIIPEDMHSGSEDLVDDQSYHFMSLLLNLANTFLYMVNTYIIVPTADDYSVSLGAAATVCGVIIGSMAVAQVFSSVYFSAWSNKSYFRPLVFSSIMLFLGNLLYALAYDVNSLTVLIVGRLLCGLGSARAVNRRYISDCVPLKTRLQASAGFVSASALGMACGPALAGLLQTNFKIYGFTFDQNTLPGWIMCLAWITYLFWLWISFKEPDHIVRENSVNTPSSDSGHRRNSNLEDGLAQPFLIDAKESLDENGEDNDENEEDPEDSHKPATSLAAAYRLLTPSVKVQLLIYFMLKFAMEILLSESSVVTTFYFNWSTSTVAMFLAVLGLTVLPVNVIVGSYVTNLFQDRQILVASEIMVLIGIAMSFRFTSHYSVPQYVSSALITFVFAEVLEGVNLSLLSRVMSSRLSRGTYNGGLLSTEAGTLARVAADMTITAAGYLGQNSLLNVTLLPSFVICVASIVATFCTYNSLY</sequence>
<keyword id="KW-0472">Membrane</keyword>
<keyword id="KW-1185">Reference proteome</keyword>
<keyword id="KW-0812">Transmembrane</keyword>
<keyword id="KW-1133">Transmembrane helix</keyword>
<gene>
    <name type="ordered locus">Os02g0678200</name>
    <name type="ordered locus">LOC_Os02g45520</name>
    <name type="ORF">OsJ_07922</name>
    <name type="ORF">OSJNBb0005A04.25</name>
    <name type="ORF">P0663F07.1</name>
</gene>
<organism>
    <name type="scientific">Oryza sativa subsp. japonica</name>
    <name type="common">Rice</name>
    <dbReference type="NCBI Taxonomy" id="39947"/>
    <lineage>
        <taxon>Eukaryota</taxon>
        <taxon>Viridiplantae</taxon>
        <taxon>Streptophyta</taxon>
        <taxon>Embryophyta</taxon>
        <taxon>Tracheophyta</taxon>
        <taxon>Spermatophyta</taxon>
        <taxon>Magnoliopsida</taxon>
        <taxon>Liliopsida</taxon>
        <taxon>Poales</taxon>
        <taxon>Poaceae</taxon>
        <taxon>BOP clade</taxon>
        <taxon>Oryzoideae</taxon>
        <taxon>Oryzeae</taxon>
        <taxon>Oryzinae</taxon>
        <taxon>Oryza</taxon>
        <taxon>Oryza sativa</taxon>
    </lineage>
</organism>
<protein>
    <recommendedName>
        <fullName>SPX domain-containing membrane protein Os02g45520</fullName>
    </recommendedName>
</protein>
<name>SPXM1_ORYSJ</name>
<evidence type="ECO:0000255" key="1"/>
<evidence type="ECO:0000255" key="2">
    <source>
        <dbReference type="PROSITE-ProRule" id="PRU00714"/>
    </source>
</evidence>
<evidence type="ECO:0000305" key="3"/>
<feature type="chain" id="PRO_0000398571" description="SPX domain-containing membrane protein Os02g45520">
    <location>
        <begin position="1"/>
        <end position="697"/>
    </location>
</feature>
<feature type="transmembrane region" description="Helical" evidence="1">
    <location>
        <begin position="247"/>
        <end position="267"/>
    </location>
</feature>
<feature type="transmembrane region" description="Helical" evidence="1">
    <location>
        <begin position="278"/>
        <end position="298"/>
    </location>
</feature>
<feature type="transmembrane region" description="Helical" evidence="1">
    <location>
        <begin position="315"/>
        <end position="335"/>
    </location>
</feature>
<feature type="transmembrane region" description="Helical" evidence="1">
    <location>
        <begin position="338"/>
        <end position="356"/>
    </location>
</feature>
<feature type="transmembrane region" description="Helical" evidence="1">
    <location>
        <begin position="375"/>
        <end position="395"/>
    </location>
</feature>
<feature type="transmembrane region" description="Helical" evidence="1">
    <location>
        <begin position="411"/>
        <end position="431"/>
    </location>
</feature>
<feature type="transmembrane region" description="Helical" evidence="1">
    <location>
        <begin position="513"/>
        <end position="533"/>
    </location>
</feature>
<feature type="transmembrane region" description="Helical" evidence="1">
    <location>
        <begin position="544"/>
        <end position="564"/>
    </location>
</feature>
<feature type="transmembrane region" description="Helical" evidence="1">
    <location>
        <begin position="576"/>
        <end position="596"/>
    </location>
</feature>
<feature type="transmembrane region" description="Helical" evidence="1">
    <location>
        <begin position="604"/>
        <end position="624"/>
    </location>
</feature>
<feature type="transmembrane region" description="Helical" evidence="1">
    <location>
        <begin position="670"/>
        <end position="690"/>
    </location>
</feature>
<feature type="domain" description="SPX" evidence="2">
    <location>
        <begin position="2"/>
        <end position="145"/>
    </location>
</feature>
<accession>Q6EPQ3</accession>
<accession>A0A0P0VMY4</accession>
<accession>A3AA38</accession>
<accession>Q0DYP3</accession>